<organism>
    <name type="scientific">Rattus norvegicus</name>
    <name type="common">Rat</name>
    <dbReference type="NCBI Taxonomy" id="10116"/>
    <lineage>
        <taxon>Eukaryota</taxon>
        <taxon>Metazoa</taxon>
        <taxon>Chordata</taxon>
        <taxon>Craniata</taxon>
        <taxon>Vertebrata</taxon>
        <taxon>Euteleostomi</taxon>
        <taxon>Mammalia</taxon>
        <taxon>Eutheria</taxon>
        <taxon>Euarchontoglires</taxon>
        <taxon>Glires</taxon>
        <taxon>Rodentia</taxon>
        <taxon>Myomorpha</taxon>
        <taxon>Muroidea</taxon>
        <taxon>Muridae</taxon>
        <taxon>Murinae</taxon>
        <taxon>Rattus</taxon>
    </lineage>
</organism>
<reference key="1">
    <citation type="journal article" date="2004" name="Genome Res.">
        <title>The status, quality, and expansion of the NIH full-length cDNA project: the Mammalian Gene Collection (MGC).</title>
        <authorList>
            <consortium name="The MGC Project Team"/>
        </authorList>
    </citation>
    <scope>NUCLEOTIDE SEQUENCE [LARGE SCALE MRNA]</scope>
    <source>
        <tissue>Testis</tissue>
    </source>
</reference>
<evidence type="ECO:0000250" key="1"/>
<evidence type="ECO:0000305" key="2"/>
<comment type="function">
    <text evidence="1">Functions in replication-dependent translation of histone mRNAs which differ from other eukaryotic mRNAs in that they do not end with a poly-A tail but a stem-loop. May participate in circularizing those mRNAs specifically enhancing their translation (By similarity).</text>
</comment>
<comment type="subunit">
    <text evidence="1">Interacts with EIF4G1, EIF4G2 and SLBP; probably tethered by SLBP to the 3'-end of mRNAs ending with the histone stem-loop, it also interacts with EIF4G1 which is bound to their 5'-end.</text>
</comment>
<comment type="subcellular location">
    <subcellularLocation>
        <location evidence="1">Cytoplasm</location>
    </subcellularLocation>
    <subcellularLocation>
        <location evidence="1">Nucleus</location>
    </subcellularLocation>
</comment>
<comment type="similarity">
    <text evidence="2">Belongs to the MIF4GD family.</text>
</comment>
<keyword id="KW-0963">Cytoplasm</keyword>
<keyword id="KW-0539">Nucleus</keyword>
<keyword id="KW-1185">Reference proteome</keyword>
<keyword id="KW-0810">Translation regulation</keyword>
<accession>Q6AXU7</accession>
<feature type="chain" id="PRO_0000337091" description="MIF4G domain-containing protein">
    <location>
        <begin position="1"/>
        <end position="222"/>
    </location>
</feature>
<feature type="domain" description="MIF4G">
    <location>
        <begin position="3"/>
        <end position="205"/>
    </location>
</feature>
<dbReference type="EMBL" id="BC079310">
    <property type="protein sequence ID" value="AAH79310.1"/>
    <property type="molecule type" value="mRNA"/>
</dbReference>
<dbReference type="RefSeq" id="NP_001014144.1">
    <property type="nucleotide sequence ID" value="NM_001014122.1"/>
</dbReference>
<dbReference type="RefSeq" id="XP_006247784.1">
    <property type="nucleotide sequence ID" value="XM_006247722.1"/>
</dbReference>
<dbReference type="SMR" id="Q6AXU7"/>
<dbReference type="FunCoup" id="Q6AXU7">
    <property type="interactions" value="1052"/>
</dbReference>
<dbReference type="IntAct" id="Q6AXU7">
    <property type="interactions" value="1"/>
</dbReference>
<dbReference type="STRING" id="10116.ENSRNOP00000005198"/>
<dbReference type="PhosphoSitePlus" id="Q6AXU7"/>
<dbReference type="PaxDb" id="10116-ENSRNOP00000005198"/>
<dbReference type="DNASU" id="360659"/>
<dbReference type="GeneID" id="360659"/>
<dbReference type="KEGG" id="rno:360659"/>
<dbReference type="AGR" id="RGD:1309685"/>
<dbReference type="CTD" id="57409"/>
<dbReference type="RGD" id="1309685">
    <property type="gene designation" value="Mif4gd"/>
</dbReference>
<dbReference type="VEuPathDB" id="HostDB:ENSRNOG00000003918"/>
<dbReference type="eggNOG" id="KOG3942">
    <property type="taxonomic scope" value="Eukaryota"/>
</dbReference>
<dbReference type="HOGENOM" id="CLU_081010_1_0_1"/>
<dbReference type="InParanoid" id="Q6AXU7"/>
<dbReference type="OrthoDB" id="6357832at2759"/>
<dbReference type="PhylomeDB" id="Q6AXU7"/>
<dbReference type="PRO" id="PR:Q6AXU7"/>
<dbReference type="Proteomes" id="UP000002494">
    <property type="component" value="Chromosome 10"/>
</dbReference>
<dbReference type="Bgee" id="ENSRNOG00000003837">
    <property type="expression patterns" value="Expressed in testis and 20 other cell types or tissues"/>
</dbReference>
<dbReference type="GO" id="GO:0005829">
    <property type="term" value="C:cytosol"/>
    <property type="evidence" value="ECO:0000318"/>
    <property type="project" value="GO_Central"/>
</dbReference>
<dbReference type="GO" id="GO:0005794">
    <property type="term" value="C:Golgi apparatus"/>
    <property type="evidence" value="ECO:0007669"/>
    <property type="project" value="Ensembl"/>
</dbReference>
<dbReference type="GO" id="GO:0062073">
    <property type="term" value="C:histone mRNA stem-loop binding complex"/>
    <property type="evidence" value="ECO:0000266"/>
    <property type="project" value="RGD"/>
</dbReference>
<dbReference type="GO" id="GO:0005730">
    <property type="term" value="C:nucleolus"/>
    <property type="evidence" value="ECO:0007669"/>
    <property type="project" value="Ensembl"/>
</dbReference>
<dbReference type="GO" id="GO:0042802">
    <property type="term" value="F:identical protein binding"/>
    <property type="evidence" value="ECO:0000266"/>
    <property type="project" value="RGD"/>
</dbReference>
<dbReference type="GO" id="GO:0003723">
    <property type="term" value="F:RNA binding"/>
    <property type="evidence" value="ECO:0007669"/>
    <property type="project" value="InterPro"/>
</dbReference>
<dbReference type="GO" id="GO:0008494">
    <property type="term" value="F:translation activator activity"/>
    <property type="evidence" value="ECO:0000318"/>
    <property type="project" value="GO_Central"/>
</dbReference>
<dbReference type="GO" id="GO:0002191">
    <property type="term" value="P:cap-dependent translational initiation"/>
    <property type="evidence" value="ECO:0000266"/>
    <property type="project" value="RGD"/>
</dbReference>
<dbReference type="GO" id="GO:0006446">
    <property type="term" value="P:regulation of translational initiation"/>
    <property type="evidence" value="ECO:0000318"/>
    <property type="project" value="GO_Central"/>
</dbReference>
<dbReference type="FunFam" id="1.25.40.180:FF:000025">
    <property type="entry name" value="MIF4G domain containing a"/>
    <property type="match status" value="1"/>
</dbReference>
<dbReference type="Gene3D" id="1.25.40.180">
    <property type="match status" value="1"/>
</dbReference>
<dbReference type="InterPro" id="IPR016024">
    <property type="entry name" value="ARM-type_fold"/>
</dbReference>
<dbReference type="InterPro" id="IPR003890">
    <property type="entry name" value="MIF4G-like_typ-3"/>
</dbReference>
<dbReference type="InterPro" id="IPR051367">
    <property type="entry name" value="mRNA_TranslReg/HistoneTransl"/>
</dbReference>
<dbReference type="PANTHER" id="PTHR23254">
    <property type="entry name" value="EIF4G DOMAIN PROTEIN"/>
    <property type="match status" value="1"/>
</dbReference>
<dbReference type="PANTHER" id="PTHR23254:SF17">
    <property type="entry name" value="MIF4G DOMAIN-CONTAINING PROTEIN"/>
    <property type="match status" value="1"/>
</dbReference>
<dbReference type="Pfam" id="PF02854">
    <property type="entry name" value="MIF4G"/>
    <property type="match status" value="1"/>
</dbReference>
<dbReference type="SMART" id="SM00543">
    <property type="entry name" value="MIF4G"/>
    <property type="match status" value="1"/>
</dbReference>
<dbReference type="SUPFAM" id="SSF48371">
    <property type="entry name" value="ARM repeat"/>
    <property type="match status" value="1"/>
</dbReference>
<name>MI4GD_RAT</name>
<proteinExistence type="evidence at transcript level"/>
<protein>
    <recommendedName>
        <fullName>MIF4G domain-containing protein</fullName>
    </recommendedName>
</protein>
<sequence>MGEASRDEYKIQSFDAETQQLLKTALKDPGAVDLERVANVIVDHSLQDCVFSKEAGRMCYAIIQAESKQAGQSVFRRGLLNRLQKEYDAREQLRACSLQGWVCYVTFICNIFDYLRVNNMPMMALVNPVYDCLFQLAQPESLSREEEVDCLVLQLHRVGEQLEKMNGQRMDELFILIRDGFLLPIDLSSLARLLLLEIIEFRAAGWKTTPAAHKYYYSEVSD</sequence>
<gene>
    <name type="primary">Mif4gd</name>
</gene>